<organism>
    <name type="scientific">Emericella nidulans (strain FGSC A4 / ATCC 38163 / CBS 112.46 / NRRL 194 / M139)</name>
    <name type="common">Aspergillus nidulans</name>
    <dbReference type="NCBI Taxonomy" id="227321"/>
    <lineage>
        <taxon>Eukaryota</taxon>
        <taxon>Fungi</taxon>
        <taxon>Dikarya</taxon>
        <taxon>Ascomycota</taxon>
        <taxon>Pezizomycotina</taxon>
        <taxon>Eurotiomycetes</taxon>
        <taxon>Eurotiomycetidae</taxon>
        <taxon>Eurotiales</taxon>
        <taxon>Aspergillaceae</taxon>
        <taxon>Aspergillus</taxon>
        <taxon>Aspergillus subgen. Nidulantes</taxon>
    </lineage>
</organism>
<gene>
    <name type="primary">fahA</name>
    <name type="synonym">fah</name>
    <name type="ORF">AN1896</name>
</gene>
<evidence type="ECO:0000250" key="1">
    <source>
        <dbReference type="UniProtKB" id="P35505"/>
    </source>
</evidence>
<evidence type="ECO:0000269" key="2">
    <source>
    </source>
</evidence>
<evidence type="ECO:0000305" key="3"/>
<evidence type="ECO:0000305" key="4">
    <source>
    </source>
</evidence>
<protein>
    <recommendedName>
        <fullName>Fumarylacetoacetase</fullName>
        <shortName>FAA</shortName>
        <ecNumber evidence="2">3.7.1.2</ecNumber>
    </recommendedName>
    <alternativeName>
        <fullName>Beta-diketonase</fullName>
    </alternativeName>
    <alternativeName>
        <fullName>Fumarylacetoacetate hydrolase</fullName>
    </alternativeName>
</protein>
<feature type="chain" id="PRO_0000156828" description="Fumarylacetoacetase">
    <location>
        <begin position="1"/>
        <end position="431"/>
    </location>
</feature>
<feature type="active site" description="Proton acceptor" evidence="3">
    <location>
        <position position="140"/>
    </location>
</feature>
<feature type="binding site" evidence="1">
    <location>
        <position position="133"/>
    </location>
    <ligand>
        <name>Ca(2+)</name>
        <dbReference type="ChEBI" id="CHEBI:29108"/>
    </ligand>
</feature>
<feature type="binding site" evidence="1">
    <location>
        <position position="135"/>
    </location>
    <ligand>
        <name>substrate</name>
    </ligand>
</feature>
<feature type="binding site" evidence="1">
    <location>
        <position position="149"/>
    </location>
    <ligand>
        <name>substrate</name>
    </ligand>
</feature>
<feature type="binding site" evidence="1">
    <location>
        <position position="209"/>
    </location>
    <ligand>
        <name>Ca(2+)</name>
        <dbReference type="ChEBI" id="CHEBI:29108"/>
    </ligand>
</feature>
<feature type="binding site" evidence="1">
    <location>
        <position position="211"/>
    </location>
    <ligand>
        <name>Ca(2+)</name>
        <dbReference type="ChEBI" id="CHEBI:29108"/>
    </ligand>
</feature>
<feature type="binding site" evidence="1">
    <location>
        <position position="243"/>
    </location>
    <ligand>
        <name>Ca(2+)</name>
        <dbReference type="ChEBI" id="CHEBI:29108"/>
    </ligand>
</feature>
<feature type="binding site" evidence="1">
    <location>
        <position position="243"/>
    </location>
    <ligand>
        <name>Mg(2+)</name>
        <dbReference type="ChEBI" id="CHEBI:18420"/>
    </ligand>
</feature>
<feature type="binding site" evidence="1">
    <location>
        <position position="250"/>
    </location>
    <ligand>
        <name>substrate</name>
    </ligand>
</feature>
<feature type="binding site" evidence="1">
    <location>
        <position position="254"/>
    </location>
    <ligand>
        <name>substrate</name>
    </ligand>
</feature>
<feature type="binding site" evidence="1">
    <location>
        <position position="263"/>
    </location>
    <ligand>
        <name>Mg(2+)</name>
        <dbReference type="ChEBI" id="CHEBI:18420"/>
    </ligand>
</feature>
<feature type="binding site" evidence="1">
    <location>
        <position position="267"/>
    </location>
    <ligand>
        <name>Mg(2+)</name>
        <dbReference type="ChEBI" id="CHEBI:18420"/>
    </ligand>
</feature>
<feature type="binding site" evidence="1">
    <location>
        <position position="362"/>
    </location>
    <ligand>
        <name>substrate</name>
    </ligand>
</feature>
<feature type="sequence conflict" description="In Ref. 2; CAA05043." evidence="3" ref="2">
    <original>NQ</original>
    <variation>KE</variation>
    <location>
        <begin position="67"/>
        <end position="68"/>
    </location>
</feature>
<feature type="sequence conflict" description="In Ref. 1; AAA85778 and 2; CAA05043." evidence="3" ref="1 2">
    <original>H</original>
    <variation>R</variation>
    <location>
        <position position="328"/>
    </location>
</feature>
<name>FAAA_EMENI</name>
<accession>Q00770</accession>
<accession>C8VKJ7</accession>
<accession>O42828</accession>
<accession>Q5BC34</accession>
<dbReference type="EC" id="3.7.1.2" evidence="2"/>
<dbReference type="EMBL" id="L41670">
    <property type="protein sequence ID" value="AAA85778.1"/>
    <property type="molecule type" value="Genomic_DNA"/>
</dbReference>
<dbReference type="EMBL" id="AJ001836">
    <property type="protein sequence ID" value="CAA05043.1"/>
    <property type="molecule type" value="Genomic_DNA"/>
</dbReference>
<dbReference type="EMBL" id="AACD01000029">
    <property type="protein sequence ID" value="EAA65061.1"/>
    <property type="molecule type" value="Genomic_DNA"/>
</dbReference>
<dbReference type="EMBL" id="BN001307">
    <property type="protein sequence ID" value="CBF85777.1"/>
    <property type="molecule type" value="Genomic_DNA"/>
</dbReference>
<dbReference type="RefSeq" id="XP_659500.1">
    <property type="nucleotide sequence ID" value="XM_654408.1"/>
</dbReference>
<dbReference type="SMR" id="Q00770"/>
<dbReference type="STRING" id="227321.Q00770"/>
<dbReference type="EnsemblFungi" id="CBF85777">
    <property type="protein sequence ID" value="CBF85777"/>
    <property type="gene ID" value="ANIA_01896"/>
</dbReference>
<dbReference type="KEGG" id="ani:ANIA_01896"/>
<dbReference type="VEuPathDB" id="FungiDB:AN1896"/>
<dbReference type="eggNOG" id="KOG2843">
    <property type="taxonomic scope" value="Eukaryota"/>
</dbReference>
<dbReference type="HOGENOM" id="CLU_026207_2_0_1"/>
<dbReference type="InParanoid" id="Q00770"/>
<dbReference type="OMA" id="YWTAAQQ"/>
<dbReference type="OrthoDB" id="9971669at2759"/>
<dbReference type="BioCyc" id="MetaCyc:MONOMER-12048"/>
<dbReference type="UniPathway" id="UPA00139">
    <property type="reaction ID" value="UER00341"/>
</dbReference>
<dbReference type="Proteomes" id="UP000000560">
    <property type="component" value="Chromosome VII"/>
</dbReference>
<dbReference type="GO" id="GO:0004334">
    <property type="term" value="F:fumarylacetoacetase activity"/>
    <property type="evidence" value="ECO:0000315"/>
    <property type="project" value="AspGD"/>
</dbReference>
<dbReference type="GO" id="GO:0046872">
    <property type="term" value="F:metal ion binding"/>
    <property type="evidence" value="ECO:0007669"/>
    <property type="project" value="UniProtKB-KW"/>
</dbReference>
<dbReference type="GO" id="GO:1902000">
    <property type="term" value="P:homogentisate catabolic process"/>
    <property type="evidence" value="ECO:0000318"/>
    <property type="project" value="GO_Central"/>
</dbReference>
<dbReference type="GO" id="GO:0006559">
    <property type="term" value="P:L-phenylalanine catabolic process"/>
    <property type="evidence" value="ECO:0000314"/>
    <property type="project" value="AspGD"/>
</dbReference>
<dbReference type="GO" id="GO:0006572">
    <property type="term" value="P:tyrosine catabolic process"/>
    <property type="evidence" value="ECO:0000318"/>
    <property type="project" value="GO_Central"/>
</dbReference>
<dbReference type="FunFam" id="2.30.30.230:FF:000001">
    <property type="entry name" value="Fumarylacetoacetase"/>
    <property type="match status" value="1"/>
</dbReference>
<dbReference type="FunFam" id="3.90.850.10:FF:000009">
    <property type="entry name" value="Fumarylacetoacetase"/>
    <property type="match status" value="1"/>
</dbReference>
<dbReference type="Gene3D" id="2.30.30.230">
    <property type="entry name" value="Fumarylacetoacetase, N-terminal domain"/>
    <property type="match status" value="1"/>
</dbReference>
<dbReference type="Gene3D" id="3.90.850.10">
    <property type="entry name" value="Fumarylacetoacetase-like, C-terminal domain"/>
    <property type="match status" value="1"/>
</dbReference>
<dbReference type="InterPro" id="IPR005959">
    <property type="entry name" value="Fumarylacetoacetase"/>
</dbReference>
<dbReference type="InterPro" id="IPR011234">
    <property type="entry name" value="Fumarylacetoacetase-like_C"/>
</dbReference>
<dbReference type="InterPro" id="IPR036663">
    <property type="entry name" value="Fumarylacetoacetase_C_sf"/>
</dbReference>
<dbReference type="InterPro" id="IPR015377">
    <property type="entry name" value="Fumarylacetoacetase_N"/>
</dbReference>
<dbReference type="InterPro" id="IPR036462">
    <property type="entry name" value="Fumarylacetoacetase_N_sf"/>
</dbReference>
<dbReference type="NCBIfam" id="TIGR01266">
    <property type="entry name" value="fum_ac_acetase"/>
    <property type="match status" value="1"/>
</dbReference>
<dbReference type="PANTHER" id="PTHR43069">
    <property type="entry name" value="FUMARYLACETOACETASE"/>
    <property type="match status" value="1"/>
</dbReference>
<dbReference type="PANTHER" id="PTHR43069:SF2">
    <property type="entry name" value="FUMARYLACETOACETASE"/>
    <property type="match status" value="1"/>
</dbReference>
<dbReference type="Pfam" id="PF01557">
    <property type="entry name" value="FAA_hydrolase"/>
    <property type="match status" value="1"/>
</dbReference>
<dbReference type="Pfam" id="PF09298">
    <property type="entry name" value="FAA_hydrolase_N"/>
    <property type="match status" value="1"/>
</dbReference>
<dbReference type="SUPFAM" id="SSF56529">
    <property type="entry name" value="FAH"/>
    <property type="match status" value="1"/>
</dbReference>
<dbReference type="SUPFAM" id="SSF63433">
    <property type="entry name" value="Fumarylacetoacetate hydrolase, FAH, N-terminal domain"/>
    <property type="match status" value="1"/>
</dbReference>
<proteinExistence type="evidence at protein level"/>
<comment type="function">
    <text evidence="2">Use of phenylalanine and phenylacetate as a carbon source.</text>
</comment>
<comment type="catalytic activity">
    <reaction evidence="2">
        <text>4-fumarylacetoacetate + H2O = acetoacetate + fumarate + H(+)</text>
        <dbReference type="Rhea" id="RHEA:10244"/>
        <dbReference type="ChEBI" id="CHEBI:13705"/>
        <dbReference type="ChEBI" id="CHEBI:15377"/>
        <dbReference type="ChEBI" id="CHEBI:15378"/>
        <dbReference type="ChEBI" id="CHEBI:18034"/>
        <dbReference type="ChEBI" id="CHEBI:29806"/>
        <dbReference type="EC" id="3.7.1.2"/>
    </reaction>
</comment>
<comment type="cofactor">
    <cofactor evidence="1">
        <name>Ca(2+)</name>
        <dbReference type="ChEBI" id="CHEBI:29108"/>
    </cofactor>
</comment>
<comment type="cofactor">
    <cofactor evidence="1">
        <name>Mg(2+)</name>
        <dbReference type="ChEBI" id="CHEBI:18420"/>
    </cofactor>
</comment>
<comment type="pathway">
    <text>Amino-acid degradation; L-phenylalanine degradation; acetoacetate and fumarate from L-phenylalanine: step 6/6.</text>
</comment>
<comment type="induction">
    <text evidence="2">By phenylacetate (PhoAc), 2OH-PhoAc, 3OH-PhoAc, 4OH-PhoAc, phenylalanine, and tyrosine. Not induced by acetate or glutamate. Expression is partially repressed by glucose.</text>
</comment>
<comment type="miscellaneous">
    <text evidence="4">Disruption of the fahA gene results in phenylalanine toxicity, secretion of succinylacetone and the absence of growth. This is analogous to the genetic disease, type I hereditary tyrosinemia in humans.</text>
</comment>
<comment type="similarity">
    <text evidence="3">Belongs to the FAH family.</text>
</comment>
<reference key="1">
    <citation type="journal article" date="1995" name="Proc. Natl. Acad. Sci. U.S.A.">
        <title>Fungal metabolic model for human type I hereditary tyrosinaemia.</title>
        <authorList>
            <person name="Fernandez-Canon J.M."/>
            <person name="Penalva M.A."/>
        </authorList>
    </citation>
    <scope>NUCLEOTIDE SEQUENCE [GENOMIC DNA]</scope>
    <scope>FUNCTION</scope>
    <scope>CATALYTIC ACTIVITY</scope>
    <scope>INDUCTION</scope>
    <scope>MISCELLANEOUS</scope>
    <source>
        <strain>biA1</strain>
    </source>
</reference>
<reference key="2">
    <citation type="journal article" date="1998" name="J. Biol. Chem.">
        <title>Characterization of a fungal maleylacetoacetate isomerase gene and identification of its human homologue.</title>
        <authorList>
            <person name="Fernandez-Canon J.M."/>
            <person name="Penalva M.A."/>
        </authorList>
    </citation>
    <scope>SEQUENCE REVISION TO 67-68</scope>
    <scope>PROBABLE FUNCTION</scope>
    <source>
        <strain>biA1</strain>
    </source>
</reference>
<reference key="3">
    <citation type="journal article" date="2005" name="Nature">
        <title>Sequencing of Aspergillus nidulans and comparative analysis with A. fumigatus and A. oryzae.</title>
        <authorList>
            <person name="Galagan J.E."/>
            <person name="Calvo S.E."/>
            <person name="Cuomo C."/>
            <person name="Ma L.-J."/>
            <person name="Wortman J.R."/>
            <person name="Batzoglou S."/>
            <person name="Lee S.-I."/>
            <person name="Bastuerkmen M."/>
            <person name="Spevak C.C."/>
            <person name="Clutterbuck J."/>
            <person name="Kapitonov V."/>
            <person name="Jurka J."/>
            <person name="Scazzocchio C."/>
            <person name="Farman M.L."/>
            <person name="Butler J."/>
            <person name="Purcell S."/>
            <person name="Harris S."/>
            <person name="Braus G.H."/>
            <person name="Draht O."/>
            <person name="Busch S."/>
            <person name="D'Enfert C."/>
            <person name="Bouchier C."/>
            <person name="Goldman G.H."/>
            <person name="Bell-Pedersen D."/>
            <person name="Griffiths-Jones S."/>
            <person name="Doonan J.H."/>
            <person name="Yu J."/>
            <person name="Vienken K."/>
            <person name="Pain A."/>
            <person name="Freitag M."/>
            <person name="Selker E.U."/>
            <person name="Archer D.B."/>
            <person name="Penalva M.A."/>
            <person name="Oakley B.R."/>
            <person name="Momany M."/>
            <person name="Tanaka T."/>
            <person name="Kumagai T."/>
            <person name="Asai K."/>
            <person name="Machida M."/>
            <person name="Nierman W.C."/>
            <person name="Denning D.W."/>
            <person name="Caddick M.X."/>
            <person name="Hynes M."/>
            <person name="Paoletti M."/>
            <person name="Fischer R."/>
            <person name="Miller B.L."/>
            <person name="Dyer P.S."/>
            <person name="Sachs M.S."/>
            <person name="Osmani S.A."/>
            <person name="Birren B.W."/>
        </authorList>
    </citation>
    <scope>NUCLEOTIDE SEQUENCE [LARGE SCALE GENOMIC DNA]</scope>
    <source>
        <strain>FGSC A4 / ATCC 38163 / CBS 112.46 / NRRL 194 / M139</strain>
    </source>
</reference>
<reference key="4">
    <citation type="journal article" date="2009" name="Fungal Genet. Biol.">
        <title>The 2008 update of the Aspergillus nidulans genome annotation: a community effort.</title>
        <authorList>
            <person name="Wortman J.R."/>
            <person name="Gilsenan J.M."/>
            <person name="Joardar V."/>
            <person name="Deegan J."/>
            <person name="Clutterbuck J."/>
            <person name="Andersen M.R."/>
            <person name="Archer D."/>
            <person name="Bencina M."/>
            <person name="Braus G."/>
            <person name="Coutinho P."/>
            <person name="von Dohren H."/>
            <person name="Doonan J."/>
            <person name="Driessen A.J."/>
            <person name="Durek P."/>
            <person name="Espeso E."/>
            <person name="Fekete E."/>
            <person name="Flipphi M."/>
            <person name="Estrada C.G."/>
            <person name="Geysens S."/>
            <person name="Goldman G."/>
            <person name="de Groot P.W."/>
            <person name="Hansen K."/>
            <person name="Harris S.D."/>
            <person name="Heinekamp T."/>
            <person name="Helmstaedt K."/>
            <person name="Henrissat B."/>
            <person name="Hofmann G."/>
            <person name="Homan T."/>
            <person name="Horio T."/>
            <person name="Horiuchi H."/>
            <person name="James S."/>
            <person name="Jones M."/>
            <person name="Karaffa L."/>
            <person name="Karanyi Z."/>
            <person name="Kato M."/>
            <person name="Keller N."/>
            <person name="Kelly D.E."/>
            <person name="Kiel J.A."/>
            <person name="Kim J.M."/>
            <person name="van der Klei I.J."/>
            <person name="Klis F.M."/>
            <person name="Kovalchuk A."/>
            <person name="Krasevec N."/>
            <person name="Kubicek C.P."/>
            <person name="Liu B."/>
            <person name="Maccabe A."/>
            <person name="Meyer V."/>
            <person name="Mirabito P."/>
            <person name="Miskei M."/>
            <person name="Mos M."/>
            <person name="Mullins J."/>
            <person name="Nelson D.R."/>
            <person name="Nielsen J."/>
            <person name="Oakley B.R."/>
            <person name="Osmani S.A."/>
            <person name="Pakula T."/>
            <person name="Paszewski A."/>
            <person name="Paulsen I."/>
            <person name="Pilsyk S."/>
            <person name="Pocsi I."/>
            <person name="Punt P.J."/>
            <person name="Ram A.F."/>
            <person name="Ren Q."/>
            <person name="Robellet X."/>
            <person name="Robson G."/>
            <person name="Seiboth B."/>
            <person name="van Solingen P."/>
            <person name="Specht T."/>
            <person name="Sun J."/>
            <person name="Taheri-Talesh N."/>
            <person name="Takeshita N."/>
            <person name="Ussery D."/>
            <person name="vanKuyk P.A."/>
            <person name="Visser H."/>
            <person name="van de Vondervoort P.J."/>
            <person name="de Vries R.P."/>
            <person name="Walton J."/>
            <person name="Xiang X."/>
            <person name="Xiong Y."/>
            <person name="Zeng A.P."/>
            <person name="Brandt B.W."/>
            <person name="Cornell M.J."/>
            <person name="van den Hondel C.A."/>
            <person name="Visser J."/>
            <person name="Oliver S.G."/>
            <person name="Turner G."/>
        </authorList>
    </citation>
    <scope>GENOME REANNOTATION</scope>
    <source>
        <strain>FGSC A4 / ATCC 38163 / CBS 112.46 / NRRL 194 / M139</strain>
    </source>
</reference>
<sequence length="431" mass="46977">MASWLQIPKNSPFSLANIPFGIISSSKLSSRVPAIAIGDYALDLSKFASSGGFSQLPVIQPHLNVFNQSTLNAFAALGRPVHRQVREYIQKVFSTETPFPQILRDNAALQKEALLPLSEVTNHLPMQIGDYTDFYAGLNHAYNVGVLFRGPDNALQPNYKHLPVAYHGRASSVVTSGTPLHRPQGQILTNPAANPKLPTFSPCKKLDIELELAFFVSTPNDLGHPVHIDKAEDHIFGVVLMNDWSARDIQAWEYVPLGPFNAKNFGTTITPWVVLIDALEPFRTVGLEPGNRESLLPYLREKRADTAYDIPLEVEVTNAGGEPTVISHSNAKNLLYSFPQMLAHHTITGCNLNTGDLLGSGTISGKENQTEGSFLEQTNGKNPIKLADGSERLFLEDGDTVILRGMAGTEGNYVGFGDCAGTILPPVQLDL</sequence>
<keyword id="KW-0106">Calcium</keyword>
<keyword id="KW-0378">Hydrolase</keyword>
<keyword id="KW-0460">Magnesium</keyword>
<keyword id="KW-0479">Metal-binding</keyword>
<keyword id="KW-0585">Phenylalanine catabolism</keyword>
<keyword id="KW-1185">Reference proteome</keyword>
<keyword id="KW-0828">Tyrosine catabolism</keyword>